<keyword id="KW-0963">Cytoplasm</keyword>
<keyword id="KW-0342">GTP-binding</keyword>
<keyword id="KW-0436">Ligase</keyword>
<keyword id="KW-0460">Magnesium</keyword>
<keyword id="KW-0479">Metal-binding</keyword>
<keyword id="KW-0547">Nucleotide-binding</keyword>
<keyword id="KW-0658">Purine biosynthesis</keyword>
<keyword id="KW-1185">Reference proteome</keyword>
<gene>
    <name evidence="1" type="primary">purA</name>
    <name type="ordered locus">Atu2447</name>
    <name type="ORF">AGR_C_4442</name>
</gene>
<reference key="1">
    <citation type="journal article" date="2001" name="Science">
        <title>The genome of the natural genetic engineer Agrobacterium tumefaciens C58.</title>
        <authorList>
            <person name="Wood D.W."/>
            <person name="Setubal J.C."/>
            <person name="Kaul R."/>
            <person name="Monks D.E."/>
            <person name="Kitajima J.P."/>
            <person name="Okura V.K."/>
            <person name="Zhou Y."/>
            <person name="Chen L."/>
            <person name="Wood G.E."/>
            <person name="Almeida N.F. Jr."/>
            <person name="Woo L."/>
            <person name="Chen Y."/>
            <person name="Paulsen I.T."/>
            <person name="Eisen J.A."/>
            <person name="Karp P.D."/>
            <person name="Bovee D. Sr."/>
            <person name="Chapman P."/>
            <person name="Clendenning J."/>
            <person name="Deatherage G."/>
            <person name="Gillet W."/>
            <person name="Grant C."/>
            <person name="Kutyavin T."/>
            <person name="Levy R."/>
            <person name="Li M.-J."/>
            <person name="McClelland E."/>
            <person name="Palmieri A."/>
            <person name="Raymond C."/>
            <person name="Rouse G."/>
            <person name="Saenphimmachak C."/>
            <person name="Wu Z."/>
            <person name="Romero P."/>
            <person name="Gordon D."/>
            <person name="Zhang S."/>
            <person name="Yoo H."/>
            <person name="Tao Y."/>
            <person name="Biddle P."/>
            <person name="Jung M."/>
            <person name="Krespan W."/>
            <person name="Perry M."/>
            <person name="Gordon-Kamm B."/>
            <person name="Liao L."/>
            <person name="Kim S."/>
            <person name="Hendrick C."/>
            <person name="Zhao Z.-Y."/>
            <person name="Dolan M."/>
            <person name="Chumley F."/>
            <person name="Tingey S.V."/>
            <person name="Tomb J.-F."/>
            <person name="Gordon M.P."/>
            <person name="Olson M.V."/>
            <person name="Nester E.W."/>
        </authorList>
    </citation>
    <scope>NUCLEOTIDE SEQUENCE [LARGE SCALE GENOMIC DNA]</scope>
    <source>
        <strain>C58 / ATCC 33970</strain>
    </source>
</reference>
<reference key="2">
    <citation type="journal article" date="2001" name="Science">
        <title>Genome sequence of the plant pathogen and biotechnology agent Agrobacterium tumefaciens C58.</title>
        <authorList>
            <person name="Goodner B."/>
            <person name="Hinkle G."/>
            <person name="Gattung S."/>
            <person name="Miller N."/>
            <person name="Blanchard M."/>
            <person name="Qurollo B."/>
            <person name="Goldman B.S."/>
            <person name="Cao Y."/>
            <person name="Askenazi M."/>
            <person name="Halling C."/>
            <person name="Mullin L."/>
            <person name="Houmiel K."/>
            <person name="Gordon J."/>
            <person name="Vaudin M."/>
            <person name="Iartchouk O."/>
            <person name="Epp A."/>
            <person name="Liu F."/>
            <person name="Wollam C."/>
            <person name="Allinger M."/>
            <person name="Doughty D."/>
            <person name="Scott C."/>
            <person name="Lappas C."/>
            <person name="Markelz B."/>
            <person name="Flanagan C."/>
            <person name="Crowell C."/>
            <person name="Gurson J."/>
            <person name="Lomo C."/>
            <person name="Sear C."/>
            <person name="Strub G."/>
            <person name="Cielo C."/>
            <person name="Slater S."/>
        </authorList>
    </citation>
    <scope>NUCLEOTIDE SEQUENCE [LARGE SCALE GENOMIC DNA]</scope>
    <source>
        <strain>C58 / ATCC 33970</strain>
    </source>
</reference>
<proteinExistence type="inferred from homology"/>
<comment type="function">
    <text evidence="1">Plays an important role in the de novo pathway of purine nucleotide biosynthesis. Catalyzes the first committed step in the biosynthesis of AMP from IMP.</text>
</comment>
<comment type="catalytic activity">
    <reaction evidence="1">
        <text>IMP + L-aspartate + GTP = N(6)-(1,2-dicarboxyethyl)-AMP + GDP + phosphate + 2 H(+)</text>
        <dbReference type="Rhea" id="RHEA:15753"/>
        <dbReference type="ChEBI" id="CHEBI:15378"/>
        <dbReference type="ChEBI" id="CHEBI:29991"/>
        <dbReference type="ChEBI" id="CHEBI:37565"/>
        <dbReference type="ChEBI" id="CHEBI:43474"/>
        <dbReference type="ChEBI" id="CHEBI:57567"/>
        <dbReference type="ChEBI" id="CHEBI:58053"/>
        <dbReference type="ChEBI" id="CHEBI:58189"/>
        <dbReference type="EC" id="6.3.4.4"/>
    </reaction>
</comment>
<comment type="cofactor">
    <cofactor evidence="1">
        <name>Mg(2+)</name>
        <dbReference type="ChEBI" id="CHEBI:18420"/>
    </cofactor>
    <text evidence="1">Binds 1 Mg(2+) ion per subunit.</text>
</comment>
<comment type="pathway">
    <text evidence="1">Purine metabolism; AMP biosynthesis via de novo pathway; AMP from IMP: step 1/2.</text>
</comment>
<comment type="subunit">
    <text evidence="1">Homodimer.</text>
</comment>
<comment type="subcellular location">
    <subcellularLocation>
        <location evidence="1">Cytoplasm</location>
    </subcellularLocation>
</comment>
<comment type="similarity">
    <text evidence="1">Belongs to the adenylosuccinate synthetase family.</text>
</comment>
<accession>Q8UCN6</accession>
<organism>
    <name type="scientific">Agrobacterium fabrum (strain C58 / ATCC 33970)</name>
    <name type="common">Agrobacterium tumefaciens (strain C58)</name>
    <dbReference type="NCBI Taxonomy" id="176299"/>
    <lineage>
        <taxon>Bacteria</taxon>
        <taxon>Pseudomonadati</taxon>
        <taxon>Pseudomonadota</taxon>
        <taxon>Alphaproteobacteria</taxon>
        <taxon>Hyphomicrobiales</taxon>
        <taxon>Rhizobiaceae</taxon>
        <taxon>Rhizobium/Agrobacterium group</taxon>
        <taxon>Agrobacterium</taxon>
        <taxon>Agrobacterium tumefaciens complex</taxon>
    </lineage>
</organism>
<protein>
    <recommendedName>
        <fullName evidence="1">Adenylosuccinate synthetase</fullName>
        <shortName evidence="1">AMPSase</shortName>
        <shortName evidence="1">AdSS</shortName>
        <ecNumber evidence="1">6.3.4.4</ecNumber>
    </recommendedName>
    <alternativeName>
        <fullName evidence="1">IMP--aspartate ligase</fullName>
    </alternativeName>
</protein>
<sequence length="432" mass="46513">MTNVVVVGSQWGDEGKGKIVDWLSERADVVVRYQGGHNAGHTLVIDGISYKLSLLPSGVVRPGKLAVIGNGVVVDPHALIAEIGRLEVQGVKVTPENLRIADNATLILSLHRELDGMREDAASNSGTKIGTTRRGIGPAYEDKVGRRAIRVMDLADMEALSAKVDRILTHHNALRRGFGATEVSHETIMEELGSIAERILPFSETVWLLLDKKRRAGARILFEGAQGSLLDIDHGTYPYVTSSNTVAGQAAAGSGMGPGSLGYILGITKAYTTRVGEGPFPTELHDEIGQFLGEKGHEFGTVTGRKRRCGWFDAALVRQSVATNGITGIALTKLDVLDGLDELKICVGYKLDGQEIDHLPASQGAQARVEPIYVTLEGWKESTVGARKWADLPAQAIKYVRQVEELIGAPVALLSTSPERDDTILVTDPFED</sequence>
<name>PURA_AGRFC</name>
<feature type="chain" id="PRO_0000095140" description="Adenylosuccinate synthetase">
    <location>
        <begin position="1"/>
        <end position="432"/>
    </location>
</feature>
<feature type="active site" description="Proton acceptor" evidence="1">
    <location>
        <position position="13"/>
    </location>
</feature>
<feature type="active site" description="Proton donor" evidence="1">
    <location>
        <position position="41"/>
    </location>
</feature>
<feature type="binding site" evidence="1">
    <location>
        <begin position="12"/>
        <end position="18"/>
    </location>
    <ligand>
        <name>GTP</name>
        <dbReference type="ChEBI" id="CHEBI:37565"/>
    </ligand>
</feature>
<feature type="binding site" description="in other chain" evidence="1">
    <location>
        <begin position="13"/>
        <end position="16"/>
    </location>
    <ligand>
        <name>IMP</name>
        <dbReference type="ChEBI" id="CHEBI:58053"/>
        <note>ligand shared between dimeric partners</note>
    </ligand>
</feature>
<feature type="binding site" evidence="1">
    <location>
        <position position="13"/>
    </location>
    <ligand>
        <name>Mg(2+)</name>
        <dbReference type="ChEBI" id="CHEBI:18420"/>
    </ligand>
</feature>
<feature type="binding site" description="in other chain" evidence="1">
    <location>
        <begin position="38"/>
        <end position="41"/>
    </location>
    <ligand>
        <name>IMP</name>
        <dbReference type="ChEBI" id="CHEBI:58053"/>
        <note>ligand shared between dimeric partners</note>
    </ligand>
</feature>
<feature type="binding site" evidence="1">
    <location>
        <begin position="40"/>
        <end position="42"/>
    </location>
    <ligand>
        <name>GTP</name>
        <dbReference type="ChEBI" id="CHEBI:37565"/>
    </ligand>
</feature>
<feature type="binding site" evidence="1">
    <location>
        <position position="40"/>
    </location>
    <ligand>
        <name>Mg(2+)</name>
        <dbReference type="ChEBI" id="CHEBI:18420"/>
    </ligand>
</feature>
<feature type="binding site" description="in other chain" evidence="1">
    <location>
        <position position="132"/>
    </location>
    <ligand>
        <name>IMP</name>
        <dbReference type="ChEBI" id="CHEBI:58053"/>
        <note>ligand shared between dimeric partners</note>
    </ligand>
</feature>
<feature type="binding site" evidence="1">
    <location>
        <position position="146"/>
    </location>
    <ligand>
        <name>IMP</name>
        <dbReference type="ChEBI" id="CHEBI:58053"/>
        <note>ligand shared between dimeric partners</note>
    </ligand>
</feature>
<feature type="binding site" description="in other chain" evidence="1">
    <location>
        <position position="226"/>
    </location>
    <ligand>
        <name>IMP</name>
        <dbReference type="ChEBI" id="CHEBI:58053"/>
        <note>ligand shared between dimeric partners</note>
    </ligand>
</feature>
<feature type="binding site" description="in other chain" evidence="1">
    <location>
        <position position="241"/>
    </location>
    <ligand>
        <name>IMP</name>
        <dbReference type="ChEBI" id="CHEBI:58053"/>
        <note>ligand shared between dimeric partners</note>
    </ligand>
</feature>
<feature type="binding site" evidence="1">
    <location>
        <begin position="301"/>
        <end position="307"/>
    </location>
    <ligand>
        <name>substrate</name>
    </ligand>
</feature>
<feature type="binding site" description="in other chain" evidence="1">
    <location>
        <position position="305"/>
    </location>
    <ligand>
        <name>IMP</name>
        <dbReference type="ChEBI" id="CHEBI:58053"/>
        <note>ligand shared between dimeric partners</note>
    </ligand>
</feature>
<feature type="binding site" evidence="1">
    <location>
        <position position="307"/>
    </location>
    <ligand>
        <name>GTP</name>
        <dbReference type="ChEBI" id="CHEBI:37565"/>
    </ligand>
</feature>
<feature type="binding site" evidence="1">
    <location>
        <begin position="333"/>
        <end position="335"/>
    </location>
    <ligand>
        <name>GTP</name>
        <dbReference type="ChEBI" id="CHEBI:37565"/>
    </ligand>
</feature>
<feature type="binding site" evidence="1">
    <location>
        <begin position="415"/>
        <end position="417"/>
    </location>
    <ligand>
        <name>GTP</name>
        <dbReference type="ChEBI" id="CHEBI:37565"/>
    </ligand>
</feature>
<evidence type="ECO:0000255" key="1">
    <source>
        <dbReference type="HAMAP-Rule" id="MF_00011"/>
    </source>
</evidence>
<dbReference type="EC" id="6.3.4.4" evidence="1"/>
<dbReference type="EMBL" id="AE007869">
    <property type="protein sequence ID" value="AAK88184.1"/>
    <property type="molecule type" value="Genomic_DNA"/>
</dbReference>
<dbReference type="PIR" id="AE2877">
    <property type="entry name" value="AE2877"/>
</dbReference>
<dbReference type="PIR" id="G97653">
    <property type="entry name" value="G97653"/>
</dbReference>
<dbReference type="RefSeq" id="NP_355399.1">
    <property type="nucleotide sequence ID" value="NC_003062.2"/>
</dbReference>
<dbReference type="RefSeq" id="WP_010972329.1">
    <property type="nucleotide sequence ID" value="NC_003062.2"/>
</dbReference>
<dbReference type="SMR" id="Q8UCN6"/>
<dbReference type="STRING" id="176299.Atu2447"/>
<dbReference type="EnsemblBacteria" id="AAK88184">
    <property type="protein sequence ID" value="AAK88184"/>
    <property type="gene ID" value="Atu2447"/>
</dbReference>
<dbReference type="GeneID" id="1134485"/>
<dbReference type="KEGG" id="atu:Atu2447"/>
<dbReference type="PATRIC" id="fig|176299.10.peg.2459"/>
<dbReference type="eggNOG" id="COG0104">
    <property type="taxonomic scope" value="Bacteria"/>
</dbReference>
<dbReference type="HOGENOM" id="CLU_029848_0_0_5"/>
<dbReference type="OrthoDB" id="9807553at2"/>
<dbReference type="PhylomeDB" id="Q8UCN6"/>
<dbReference type="BioCyc" id="AGRO:ATU2447-MONOMER"/>
<dbReference type="UniPathway" id="UPA00075">
    <property type="reaction ID" value="UER00335"/>
</dbReference>
<dbReference type="Proteomes" id="UP000000813">
    <property type="component" value="Chromosome circular"/>
</dbReference>
<dbReference type="GO" id="GO:0005737">
    <property type="term" value="C:cytoplasm"/>
    <property type="evidence" value="ECO:0007669"/>
    <property type="project" value="UniProtKB-SubCell"/>
</dbReference>
<dbReference type="GO" id="GO:0004019">
    <property type="term" value="F:adenylosuccinate synthase activity"/>
    <property type="evidence" value="ECO:0007669"/>
    <property type="project" value="UniProtKB-UniRule"/>
</dbReference>
<dbReference type="GO" id="GO:0005525">
    <property type="term" value="F:GTP binding"/>
    <property type="evidence" value="ECO:0007669"/>
    <property type="project" value="UniProtKB-UniRule"/>
</dbReference>
<dbReference type="GO" id="GO:0000287">
    <property type="term" value="F:magnesium ion binding"/>
    <property type="evidence" value="ECO:0007669"/>
    <property type="project" value="UniProtKB-UniRule"/>
</dbReference>
<dbReference type="GO" id="GO:0044208">
    <property type="term" value="P:'de novo' AMP biosynthetic process"/>
    <property type="evidence" value="ECO:0007669"/>
    <property type="project" value="UniProtKB-UniRule"/>
</dbReference>
<dbReference type="GO" id="GO:0046040">
    <property type="term" value="P:IMP metabolic process"/>
    <property type="evidence" value="ECO:0007669"/>
    <property type="project" value="TreeGrafter"/>
</dbReference>
<dbReference type="CDD" id="cd03108">
    <property type="entry name" value="AdSS"/>
    <property type="match status" value="1"/>
</dbReference>
<dbReference type="FunFam" id="1.10.300.10:FF:000001">
    <property type="entry name" value="Adenylosuccinate synthetase"/>
    <property type="match status" value="1"/>
</dbReference>
<dbReference type="FunFam" id="3.90.170.10:FF:000001">
    <property type="entry name" value="Adenylosuccinate synthetase"/>
    <property type="match status" value="1"/>
</dbReference>
<dbReference type="Gene3D" id="3.40.440.10">
    <property type="entry name" value="Adenylosuccinate Synthetase, subunit A, domain 1"/>
    <property type="match status" value="1"/>
</dbReference>
<dbReference type="Gene3D" id="1.10.300.10">
    <property type="entry name" value="Adenylosuccinate Synthetase, subunit A, domain 2"/>
    <property type="match status" value="1"/>
</dbReference>
<dbReference type="Gene3D" id="3.90.170.10">
    <property type="entry name" value="Adenylosuccinate Synthetase, subunit A, domain 3"/>
    <property type="match status" value="1"/>
</dbReference>
<dbReference type="HAMAP" id="MF_00011">
    <property type="entry name" value="Adenylosucc_synth"/>
    <property type="match status" value="1"/>
</dbReference>
<dbReference type="InterPro" id="IPR018220">
    <property type="entry name" value="Adenylosuccin_syn_GTP-bd"/>
</dbReference>
<dbReference type="InterPro" id="IPR033128">
    <property type="entry name" value="Adenylosuccin_syn_Lys_AS"/>
</dbReference>
<dbReference type="InterPro" id="IPR042109">
    <property type="entry name" value="Adenylosuccinate_synth_dom1"/>
</dbReference>
<dbReference type="InterPro" id="IPR042110">
    <property type="entry name" value="Adenylosuccinate_synth_dom2"/>
</dbReference>
<dbReference type="InterPro" id="IPR042111">
    <property type="entry name" value="Adenylosuccinate_synth_dom3"/>
</dbReference>
<dbReference type="InterPro" id="IPR001114">
    <property type="entry name" value="Adenylosuccinate_synthetase"/>
</dbReference>
<dbReference type="InterPro" id="IPR027417">
    <property type="entry name" value="P-loop_NTPase"/>
</dbReference>
<dbReference type="NCBIfam" id="NF002223">
    <property type="entry name" value="PRK01117.1"/>
    <property type="match status" value="1"/>
</dbReference>
<dbReference type="NCBIfam" id="TIGR00184">
    <property type="entry name" value="purA"/>
    <property type="match status" value="1"/>
</dbReference>
<dbReference type="PANTHER" id="PTHR11846">
    <property type="entry name" value="ADENYLOSUCCINATE SYNTHETASE"/>
    <property type="match status" value="1"/>
</dbReference>
<dbReference type="PANTHER" id="PTHR11846:SF0">
    <property type="entry name" value="ADENYLOSUCCINATE SYNTHETASE"/>
    <property type="match status" value="1"/>
</dbReference>
<dbReference type="Pfam" id="PF00709">
    <property type="entry name" value="Adenylsucc_synt"/>
    <property type="match status" value="1"/>
</dbReference>
<dbReference type="SMART" id="SM00788">
    <property type="entry name" value="Adenylsucc_synt"/>
    <property type="match status" value="1"/>
</dbReference>
<dbReference type="SUPFAM" id="SSF52540">
    <property type="entry name" value="P-loop containing nucleoside triphosphate hydrolases"/>
    <property type="match status" value="1"/>
</dbReference>
<dbReference type="PROSITE" id="PS01266">
    <property type="entry name" value="ADENYLOSUCCIN_SYN_1"/>
    <property type="match status" value="1"/>
</dbReference>
<dbReference type="PROSITE" id="PS00513">
    <property type="entry name" value="ADENYLOSUCCIN_SYN_2"/>
    <property type="match status" value="1"/>
</dbReference>